<sequence>MKFSVKNILEMEVCLALGCTEPVAIALGAAAAATLLPGLKFDHIHLIIDPNIYKNGLAVVIPGSGGLTGLDTASALGAFGGDAYGKLEVLSSLSPEMVARASAFLAEGRVKVDLREESGLYVKTTISGGGHVAESLITDVHTNIVSLMLDGEEVADPRLVATEAMSTGNKLAELEEWLRSLTLEDILDLTNELDEADLDFLEEGVQHNLRLAEYGLKHGSGLGIGKDIDRLLKQKLLVKDMTTSARMLTSAAADARMDGVNLPAMSSGGSGNHGLTAILPIWAIKDFIETDRESVLRAIGLSHIITAYIKAHTGRLSAVCGCSVAAGAGATAGITYLVGGDLQQVEGAIKNILEDLAGVICDGAKAGCAIKLNTAAGAAVQAALFSLQGVSVKDTDGIIGDSTRQTVQNIGDLSNYGMVATDKTILKIMRAKHKKG</sequence>
<protein>
    <recommendedName>
        <fullName evidence="1">UPF0597 protein DP0591</fullName>
    </recommendedName>
</protein>
<proteinExistence type="inferred from homology"/>
<accession>Q6AQQ3</accession>
<evidence type="ECO:0000255" key="1">
    <source>
        <dbReference type="HAMAP-Rule" id="MF_01845"/>
    </source>
</evidence>
<evidence type="ECO:0000305" key="2"/>
<organism>
    <name type="scientific">Desulfotalea psychrophila (strain LSv54 / DSM 12343)</name>
    <dbReference type="NCBI Taxonomy" id="177439"/>
    <lineage>
        <taxon>Bacteria</taxon>
        <taxon>Pseudomonadati</taxon>
        <taxon>Thermodesulfobacteriota</taxon>
        <taxon>Desulfobulbia</taxon>
        <taxon>Desulfobulbales</taxon>
        <taxon>Desulfocapsaceae</taxon>
        <taxon>Desulfotalea</taxon>
    </lineage>
</organism>
<name>Y591_DESPS</name>
<feature type="chain" id="PRO_0000339812" description="UPF0597 protein DP0591">
    <location>
        <begin position="1"/>
        <end position="436"/>
    </location>
</feature>
<gene>
    <name type="ordered locus">DP0591</name>
</gene>
<comment type="similarity">
    <text evidence="1">Belongs to the UPF0597 family.</text>
</comment>
<comment type="sequence caution" evidence="2">
    <conflict type="erroneous initiation">
        <sequence resource="EMBL-CDS" id="CAG35320"/>
    </conflict>
</comment>
<keyword id="KW-1185">Reference proteome</keyword>
<dbReference type="EMBL" id="CR522870">
    <property type="protein sequence ID" value="CAG35320.1"/>
    <property type="status" value="ALT_INIT"/>
    <property type="molecule type" value="Genomic_DNA"/>
</dbReference>
<dbReference type="RefSeq" id="WP_041277565.1">
    <property type="nucleotide sequence ID" value="NC_006138.1"/>
</dbReference>
<dbReference type="SMR" id="Q6AQQ3"/>
<dbReference type="KEGG" id="dps:DP0591"/>
<dbReference type="eggNOG" id="COG3681">
    <property type="taxonomic scope" value="Bacteria"/>
</dbReference>
<dbReference type="HOGENOM" id="CLU_051840_0_0_7"/>
<dbReference type="OrthoDB" id="41906at2"/>
<dbReference type="Proteomes" id="UP000000602">
    <property type="component" value="Chromosome"/>
</dbReference>
<dbReference type="GO" id="GO:0080146">
    <property type="term" value="F:L-cysteine desulfhydrase activity"/>
    <property type="evidence" value="ECO:0007669"/>
    <property type="project" value="TreeGrafter"/>
</dbReference>
<dbReference type="GO" id="GO:0019450">
    <property type="term" value="P:L-cysteine catabolic process to pyruvate"/>
    <property type="evidence" value="ECO:0007669"/>
    <property type="project" value="TreeGrafter"/>
</dbReference>
<dbReference type="HAMAP" id="MF_01845">
    <property type="entry name" value="UPF0597"/>
    <property type="match status" value="1"/>
</dbReference>
<dbReference type="InterPro" id="IPR005130">
    <property type="entry name" value="Ser_deHydtase-like_asu"/>
</dbReference>
<dbReference type="InterPro" id="IPR021144">
    <property type="entry name" value="UPF0597"/>
</dbReference>
<dbReference type="PANTHER" id="PTHR30501">
    <property type="entry name" value="UPF0597 PROTEIN YHAM"/>
    <property type="match status" value="1"/>
</dbReference>
<dbReference type="PANTHER" id="PTHR30501:SF2">
    <property type="entry name" value="UPF0597 PROTEIN YHAM"/>
    <property type="match status" value="1"/>
</dbReference>
<dbReference type="Pfam" id="PF03313">
    <property type="entry name" value="SDH_alpha"/>
    <property type="match status" value="1"/>
</dbReference>
<dbReference type="PIRSF" id="PIRSF006054">
    <property type="entry name" value="UCP006054"/>
    <property type="match status" value="1"/>
</dbReference>
<reference key="1">
    <citation type="journal article" date="2004" name="Environ. Microbiol.">
        <title>The genome of Desulfotalea psychrophila, a sulfate-reducing bacterium from permanently cold Arctic sediments.</title>
        <authorList>
            <person name="Rabus R."/>
            <person name="Ruepp A."/>
            <person name="Frickey T."/>
            <person name="Rattei T."/>
            <person name="Fartmann B."/>
            <person name="Stark M."/>
            <person name="Bauer M."/>
            <person name="Zibat A."/>
            <person name="Lombardot T."/>
            <person name="Becker I."/>
            <person name="Amann J."/>
            <person name="Gellner K."/>
            <person name="Teeling H."/>
            <person name="Leuschner W.D."/>
            <person name="Gloeckner F.-O."/>
            <person name="Lupas A.N."/>
            <person name="Amann R."/>
            <person name="Klenk H.-P."/>
        </authorList>
    </citation>
    <scope>NUCLEOTIDE SEQUENCE [LARGE SCALE GENOMIC DNA]</scope>
    <source>
        <strain>DSM 12343 / LSv54</strain>
    </source>
</reference>